<gene>
    <name evidence="8" type="primary">somi-1</name>
    <name evidence="8" type="ORF">M04G12.4</name>
</gene>
<evidence type="ECO:0000255" key="1">
    <source>
        <dbReference type="PROSITE-ProRule" id="PRU00042"/>
    </source>
</evidence>
<evidence type="ECO:0000256" key="2">
    <source>
        <dbReference type="SAM" id="MobiDB-lite"/>
    </source>
</evidence>
<evidence type="ECO:0000269" key="3">
    <source>
    </source>
</evidence>
<evidence type="ECO:0000305" key="4"/>
<evidence type="ECO:0000312" key="5">
    <source>
        <dbReference type="Proteomes" id="UP000001940"/>
    </source>
</evidence>
<evidence type="ECO:0000312" key="6">
    <source>
        <dbReference type="WormBase" id="M04G12.4a"/>
    </source>
</evidence>
<evidence type="ECO:0000312" key="7">
    <source>
        <dbReference type="WormBase" id="M04G12.4b"/>
    </source>
</evidence>
<evidence type="ECO:0000312" key="8">
    <source>
        <dbReference type="WormBase" id="M04G12.4c"/>
    </source>
</evidence>
<evidence type="ECO:0000312" key="9">
    <source>
        <dbReference type="WormBase" id="M04G12.4d"/>
    </source>
</evidence>
<sequence length="582" mass="63536">MLKPPIITSNDNNNTKVAENLNDLNNKGKMSGQQIESFSPWHAQTSSSAVTGTSELFGSTYAMLSDHSVYPEQWSGKQLSQSVLFEQPQIQPLVGNSYDPPVRFDPPYAYRATATGYMPTVPGLSTNSSPYYPRTSGYAAGQQFYAPSLSGVPNTQQLILAAQVAQASNVQQQLQQQVLRPEPLRPATQKSTNGVHRSTSNSSAETLRNNSVSAATVSPSDDNSLNSPALTSSGSAGSGTPPLGIDLNNTDLESGDEERVMCMACRGVYPSRRSLTGHIGRNEKCREIIGRNYLDALAQGVNPPIPGTDAAIKSGAITTGADGMSPVCPFCDRFISHYKGNIRRHINQCRKSAEPMKRHRVEAHEKQSPKKKVKKEQNEMYQHEYNDHDSSSMSGGMMNSPKISPPSSSFYGANSSDLCSPGEYSNSAYEPYPTPMLENTERTSTETAVLQDAYICEDCDFVTVYKGNMKRHLNTCHPQPEFKSLKEWDQKLEGMRASNLGISGDRLQERLAAHKANSSRGRKPRKKKENNTEESESIDFKNILNSETGALLESLASSSSSMGGYSNGNNFQPPPPPPPMLL</sequence>
<feature type="chain" id="PRO_0000451822" description="Zinc finger protein somi-1">
    <location>
        <begin position="1"/>
        <end position="582"/>
    </location>
</feature>
<feature type="zinc finger region" description="C2H2-type; Degenerate" evidence="1">
    <location>
        <begin position="454"/>
        <end position="477"/>
    </location>
</feature>
<feature type="region of interest" description="Disordered" evidence="2">
    <location>
        <begin position="179"/>
        <end position="251"/>
    </location>
</feature>
<feature type="region of interest" description="Disordered" evidence="2">
    <location>
        <begin position="352"/>
        <end position="377"/>
    </location>
</feature>
<feature type="region of interest" description="Disordered" evidence="2">
    <location>
        <begin position="513"/>
        <end position="582"/>
    </location>
</feature>
<feature type="compositionally biased region" description="Polar residues" evidence="2">
    <location>
        <begin position="188"/>
        <end position="226"/>
    </location>
</feature>
<feature type="compositionally biased region" description="Low complexity" evidence="2">
    <location>
        <begin position="227"/>
        <end position="244"/>
    </location>
</feature>
<feature type="compositionally biased region" description="Basic and acidic residues" evidence="2">
    <location>
        <begin position="352"/>
        <end position="368"/>
    </location>
</feature>
<feature type="compositionally biased region" description="Low complexity" evidence="2">
    <location>
        <begin position="551"/>
        <end position="570"/>
    </location>
</feature>
<feature type="compositionally biased region" description="Pro residues" evidence="2">
    <location>
        <begin position="572"/>
        <end position="582"/>
    </location>
</feature>
<feature type="splice variant" id="VSP_060871" description="In isoform b and isoform d." evidence="4">
    <location>
        <begin position="1"/>
        <end position="29"/>
    </location>
</feature>
<feature type="splice variant" id="VSP_060872" description="In isoform a and isoform b." evidence="4">
    <original>KSLKE</original>
    <variation>KK</variation>
    <location>
        <begin position="483"/>
        <end position="487"/>
    </location>
</feature>
<feature type="mutagenesis site" description="In mg431; suppresses the eversion of the vulva (the Evl phenotype) in an miR-84 overexpressing background." evidence="3">
    <location>
        <begin position="44"/>
        <end position="582"/>
    </location>
</feature>
<feature type="mutagenesis site" description="In mg415; adults have a shorter body length. Suppresses the eversion of the vulva (the Evl phenotype) and precocious alae formation in an miR-84 overexpressing background." evidence="3">
    <location>
        <begin position="175"/>
        <end position="582"/>
    </location>
</feature>
<feature type="mutagenesis site" description="In mg431; suppresses the eversion of the vulva (the Evl phenotype) in an miR-84 overexpressing background." evidence="3">
    <location>
        <begin position="333"/>
        <end position="582"/>
    </location>
</feature>
<keyword id="KW-0025">Alternative splicing</keyword>
<keyword id="KW-0221">Differentiation</keyword>
<keyword id="KW-0238">DNA-binding</keyword>
<keyword id="KW-0479">Metal-binding</keyword>
<keyword id="KW-0539">Nucleus</keyword>
<keyword id="KW-1185">Reference proteome</keyword>
<keyword id="KW-0804">Transcription</keyword>
<keyword id="KW-0805">Transcription regulation</keyword>
<keyword id="KW-0862">Zinc</keyword>
<keyword id="KW-0863">Zinc-finger</keyword>
<accession>A0A486WWJ9</accession>
<accession>A0A486WWS8</accession>
<accession>G5EBR5</accession>
<accession>Q8I4H1</accession>
<proteinExistence type="evidence at protein level"/>
<organism evidence="5">
    <name type="scientific">Caenorhabditis elegans</name>
    <dbReference type="NCBI Taxonomy" id="6239"/>
    <lineage>
        <taxon>Eukaryota</taxon>
        <taxon>Metazoa</taxon>
        <taxon>Ecdysozoa</taxon>
        <taxon>Nematoda</taxon>
        <taxon>Chromadorea</taxon>
        <taxon>Rhabditida</taxon>
        <taxon>Rhabditina</taxon>
        <taxon>Rhabditomorpha</taxon>
        <taxon>Rhabditoidea</taxon>
        <taxon>Rhabditidae</taxon>
        <taxon>Peloderinae</taxon>
        <taxon>Caenorhabditis</taxon>
    </lineage>
</organism>
<name>SOMI1_CAEEL</name>
<dbReference type="EMBL" id="BX284605">
    <property type="protein sequence ID" value="CAB03211.3"/>
    <property type="molecule type" value="Genomic_DNA"/>
</dbReference>
<dbReference type="EMBL" id="BX284605">
    <property type="protein sequence ID" value="CAD56592.2"/>
    <property type="molecule type" value="Genomic_DNA"/>
</dbReference>
<dbReference type="EMBL" id="BX284605">
    <property type="protein sequence ID" value="VGM69540.1"/>
    <property type="molecule type" value="Genomic_DNA"/>
</dbReference>
<dbReference type="EMBL" id="BX284605">
    <property type="protein sequence ID" value="VGM69580.1"/>
    <property type="molecule type" value="Genomic_DNA"/>
</dbReference>
<dbReference type="PIR" id="T23722">
    <property type="entry name" value="T23722"/>
</dbReference>
<dbReference type="RefSeq" id="NP_001360520.1">
    <molecule id="A0A486WWJ9-1"/>
    <property type="nucleotide sequence ID" value="NM_001373144.3"/>
</dbReference>
<dbReference type="RefSeq" id="NP_001360558.1">
    <molecule id="A0A486WWJ9-4"/>
    <property type="nucleotide sequence ID" value="NM_001373145.2"/>
</dbReference>
<dbReference type="RefSeq" id="NP_001379322.1">
    <molecule id="A0A486WWJ9-3"/>
    <property type="nucleotide sequence ID" value="NM_001392639.1"/>
</dbReference>
<dbReference type="RefSeq" id="NP_506320.3">
    <molecule id="A0A486WWJ9-2"/>
    <property type="nucleotide sequence ID" value="NM_073919.5"/>
</dbReference>
<dbReference type="RefSeq" id="NP_872161.2">
    <property type="nucleotide sequence ID" value="NM_182361.4"/>
</dbReference>
<dbReference type="FunCoup" id="A0A486WWJ9">
    <property type="interactions" value="411"/>
</dbReference>
<dbReference type="IntAct" id="A0A486WWJ9">
    <property type="interactions" value="3"/>
</dbReference>
<dbReference type="STRING" id="6239.M04G12.4a.1"/>
<dbReference type="PaxDb" id="6239-M04G12.4a"/>
<dbReference type="EnsemblMetazoa" id="M04G12.4a.1">
    <molecule id="A0A486WWJ9-2"/>
    <property type="protein sequence ID" value="M04G12.4a.1"/>
    <property type="gene ID" value="WBGene00010868"/>
</dbReference>
<dbReference type="EnsemblMetazoa" id="M04G12.4b.1">
    <molecule id="A0A486WWJ9-3"/>
    <property type="protein sequence ID" value="M04G12.4b.1"/>
    <property type="gene ID" value="WBGene00010868"/>
</dbReference>
<dbReference type="EnsemblMetazoa" id="M04G12.4c.1">
    <molecule id="A0A486WWJ9-1"/>
    <property type="protein sequence ID" value="M04G12.4c.1"/>
    <property type="gene ID" value="WBGene00010868"/>
</dbReference>
<dbReference type="EnsemblMetazoa" id="M04G12.4d.1">
    <molecule id="A0A486WWJ9-4"/>
    <property type="protein sequence ID" value="M04G12.4d.1"/>
    <property type="gene ID" value="WBGene00010868"/>
</dbReference>
<dbReference type="GeneID" id="179819"/>
<dbReference type="KEGG" id="cel:CELE_M04G12.4"/>
<dbReference type="UCSC" id="M04G12.4b.1">
    <property type="organism name" value="c. elegans"/>
</dbReference>
<dbReference type="AGR" id="WB:WBGene00010868"/>
<dbReference type="CTD" id="179819"/>
<dbReference type="WormBase" id="M04G12.4a">
    <molecule id="A0A486WWJ9-2"/>
    <property type="protein sequence ID" value="CE36495"/>
    <property type="gene ID" value="WBGene00010868"/>
    <property type="gene designation" value="somi-1"/>
</dbReference>
<dbReference type="WormBase" id="M04G12.4b">
    <molecule id="A0A486WWJ9-3"/>
    <property type="protein sequence ID" value="CE36496"/>
    <property type="gene ID" value="WBGene00010868"/>
    <property type="gene designation" value="somi-1"/>
</dbReference>
<dbReference type="WormBase" id="M04G12.4c">
    <molecule id="A0A486WWJ9-1"/>
    <property type="protein sequence ID" value="CE53045"/>
    <property type="gene ID" value="WBGene00010868"/>
    <property type="gene designation" value="somi-1"/>
</dbReference>
<dbReference type="WormBase" id="M04G12.4d">
    <molecule id="A0A486WWJ9-4"/>
    <property type="protein sequence ID" value="CE53125"/>
    <property type="gene ID" value="WBGene00010868"/>
    <property type="gene designation" value="somi-1"/>
</dbReference>
<dbReference type="eggNOG" id="ENOG502SA6V">
    <property type="taxonomic scope" value="Eukaryota"/>
</dbReference>
<dbReference type="HOGENOM" id="CLU_471120_0_0_1"/>
<dbReference type="InParanoid" id="A0A486WWJ9"/>
<dbReference type="OMA" id="EDAYICD"/>
<dbReference type="OrthoDB" id="5843400at2759"/>
<dbReference type="PRO" id="PR:A0A486WWJ9"/>
<dbReference type="Proteomes" id="UP000001940">
    <property type="component" value="Chromosome V"/>
</dbReference>
<dbReference type="Bgee" id="WBGene00010868">
    <property type="expression patterns" value="Expressed in pharyngeal muscle cell (C elegans) and 3 other cell types or tissues"/>
</dbReference>
<dbReference type="ExpressionAtlas" id="A0A486WWJ9">
    <property type="expression patterns" value="baseline and differential"/>
</dbReference>
<dbReference type="GO" id="GO:0005634">
    <property type="term" value="C:nucleus"/>
    <property type="evidence" value="ECO:0000314"/>
    <property type="project" value="WormBase"/>
</dbReference>
<dbReference type="GO" id="GO:0003677">
    <property type="term" value="F:DNA binding"/>
    <property type="evidence" value="ECO:0007669"/>
    <property type="project" value="UniProtKB-KW"/>
</dbReference>
<dbReference type="GO" id="GO:0008270">
    <property type="term" value="F:zinc ion binding"/>
    <property type="evidence" value="ECO:0007669"/>
    <property type="project" value="UniProtKB-KW"/>
</dbReference>
<dbReference type="GO" id="GO:0030154">
    <property type="term" value="P:cell differentiation"/>
    <property type="evidence" value="ECO:0007669"/>
    <property type="project" value="UniProtKB-KW"/>
</dbReference>
<dbReference type="Pfam" id="PF13909">
    <property type="entry name" value="zf-H2C2_5"/>
    <property type="match status" value="1"/>
</dbReference>
<reference evidence="5" key="1">
    <citation type="journal article" date="1998" name="Science">
        <title>Genome sequence of the nematode C. elegans: a platform for investigating biology.</title>
        <authorList>
            <consortium name="The C. elegans sequencing consortium"/>
        </authorList>
    </citation>
    <scope>NUCLEOTIDE SEQUENCE [LARGE SCALE GENOMIC DNA]</scope>
    <source>
        <strain evidence="5">Bristol N2</strain>
    </source>
</reference>
<reference evidence="4" key="2">
    <citation type="journal article" date="2011" name="Genes Dev.">
        <title>The Caenorhabditis elegans SOMI-1 zinc finger protein and SWI/SNF promote regulation of development by the mir-84 microRNA.</title>
        <authorList>
            <person name="Hayes G.D."/>
            <person name="Riedel C.G."/>
            <person name="Ruvkun G."/>
        </authorList>
    </citation>
    <scope>FUNCTION</scope>
    <scope>INTERACTION WITH SWSN-9</scope>
    <scope>SUBCELLULAR LOCATION</scope>
    <scope>TISSUE SPECIFICITY</scope>
    <scope>DEVELOPMENTAL STAGE</scope>
    <scope>MUTAGENESIS OF 44-GLN--LEU-582; 175-GLN--VAL-582 AND 333-ARG--VAL-582</scope>
</reference>
<comment type="function">
    <text evidence="3">DNA-binding protein which binds to the promoters of let-60, lin-14 and lin-28, possibly to regulate genes involved in hypodermal and vulval development (PubMed:21979920). Together with miRNAs mir-84 and let-7 may direct terminal differentiation of the seam cells, exit from the molting cycle, and vulva formation (PubMed:21979920). Does not regulate the expression of mir-84 (PubMed:21979920). May promote hypodermal differentiation in association with swsn-9, a component of SWI/SNF chromatin remodeling complexes (PubMed:21979920).</text>
</comment>
<comment type="subunit">
    <text evidence="3">May interact with swsn-9; the interaction promotes hypodermal differentiation.</text>
</comment>
<comment type="subcellular location">
    <subcellularLocation>
        <location evidence="3">Nucleus</location>
    </subcellularLocation>
    <text evidence="3">Localizes to nuclear foci in embryos and larvae (PubMed:21979920). Localizes to DNA (PubMed:21979920). Partially co-localizes with swsn-9 in hypodermal nuclei (PubMed:21979920).</text>
</comment>
<comment type="alternative products">
    <event type="alternative splicing"/>
    <isoform>
        <id>A0A486WWJ9-1</id>
        <name evidence="8">c</name>
        <sequence type="displayed"/>
    </isoform>
    <isoform>
        <id>A0A486WWJ9-2</id>
        <name evidence="6">a</name>
        <sequence type="described" ref="VSP_060872"/>
    </isoform>
    <isoform>
        <id>A0A486WWJ9-3</id>
        <name evidence="7">b</name>
        <sequence type="described" ref="VSP_060871 VSP_060872"/>
    </isoform>
    <isoform>
        <id>A0A486WWJ9-4</id>
        <name evidence="9">d</name>
        <sequence type="described" ref="VSP_060871"/>
    </isoform>
</comment>
<comment type="tissue specificity">
    <text evidence="3">Expressed in hypodermal seam cells, the somatic gonad and vulval precursor cells, body wall muscle and head neurons.</text>
</comment>
<comment type="developmental stage">
    <text evidence="3">Expressed from embryogenesis to adulthood (PubMed:21979920). First expressed in comma stage embryos (PubMed:21979920). Highly expressed in L4 larvae and adults (PubMed:21979920).</text>
</comment>
<protein>
    <recommendedName>
        <fullName evidence="4">Zinc finger protein somi-1</fullName>
    </recommendedName>
    <alternativeName>
        <fullName evidence="8">Suppressor of overexpressed micro-RNA protein 1</fullName>
    </alternativeName>
</protein>